<keyword id="KW-0687">Ribonucleoprotein</keyword>
<keyword id="KW-0689">Ribosomal protein</keyword>
<keyword id="KW-0694">RNA-binding</keyword>
<keyword id="KW-0699">rRNA-binding</keyword>
<name>RL2_LACGA</name>
<gene>
    <name evidence="1" type="primary">rplB</name>
    <name type="ordered locus">LGAS_0294</name>
</gene>
<evidence type="ECO:0000255" key="1">
    <source>
        <dbReference type="HAMAP-Rule" id="MF_01320"/>
    </source>
</evidence>
<evidence type="ECO:0000256" key="2">
    <source>
        <dbReference type="SAM" id="MobiDB-lite"/>
    </source>
</evidence>
<evidence type="ECO:0000305" key="3"/>
<feature type="chain" id="PRO_0000309940" description="Large ribosomal subunit protein uL2">
    <location>
        <begin position="1"/>
        <end position="278"/>
    </location>
</feature>
<feature type="region of interest" description="Disordered" evidence="2">
    <location>
        <begin position="210"/>
        <end position="278"/>
    </location>
</feature>
<feature type="compositionally biased region" description="Basic residues" evidence="2">
    <location>
        <begin position="210"/>
        <end position="219"/>
    </location>
</feature>
<feature type="compositionally biased region" description="Basic residues" evidence="2">
    <location>
        <begin position="252"/>
        <end position="263"/>
    </location>
</feature>
<comment type="function">
    <text evidence="1">One of the primary rRNA binding proteins. Required for association of the 30S and 50S subunits to form the 70S ribosome, for tRNA binding and peptide bond formation. It has been suggested to have peptidyltransferase activity; this is somewhat controversial. Makes several contacts with the 16S rRNA in the 70S ribosome.</text>
</comment>
<comment type="subunit">
    <text evidence="1">Part of the 50S ribosomal subunit. Forms a bridge to the 30S subunit in the 70S ribosome.</text>
</comment>
<comment type="similarity">
    <text evidence="1">Belongs to the universal ribosomal protein uL2 family.</text>
</comment>
<organism>
    <name type="scientific">Lactobacillus gasseri (strain ATCC 33323 / DSM 20243 / BCRC 14619 / CIP 102991 / JCM 1131 / KCTC 3163 / NCIMB 11718 / NCTC 13722 / AM63)</name>
    <dbReference type="NCBI Taxonomy" id="324831"/>
    <lineage>
        <taxon>Bacteria</taxon>
        <taxon>Bacillati</taxon>
        <taxon>Bacillota</taxon>
        <taxon>Bacilli</taxon>
        <taxon>Lactobacillales</taxon>
        <taxon>Lactobacillaceae</taxon>
        <taxon>Lactobacillus</taxon>
    </lineage>
</organism>
<reference key="1">
    <citation type="journal article" date="2006" name="Proc. Natl. Acad. Sci. U.S.A.">
        <title>Comparative genomics of the lactic acid bacteria.</title>
        <authorList>
            <person name="Makarova K.S."/>
            <person name="Slesarev A."/>
            <person name="Wolf Y.I."/>
            <person name="Sorokin A."/>
            <person name="Mirkin B."/>
            <person name="Koonin E.V."/>
            <person name="Pavlov A."/>
            <person name="Pavlova N."/>
            <person name="Karamychev V."/>
            <person name="Polouchine N."/>
            <person name="Shakhova V."/>
            <person name="Grigoriev I."/>
            <person name="Lou Y."/>
            <person name="Rohksar D."/>
            <person name="Lucas S."/>
            <person name="Huang K."/>
            <person name="Goodstein D.M."/>
            <person name="Hawkins T."/>
            <person name="Plengvidhya V."/>
            <person name="Welker D."/>
            <person name="Hughes J."/>
            <person name="Goh Y."/>
            <person name="Benson A."/>
            <person name="Baldwin K."/>
            <person name="Lee J.-H."/>
            <person name="Diaz-Muniz I."/>
            <person name="Dosti B."/>
            <person name="Smeianov V."/>
            <person name="Wechter W."/>
            <person name="Barabote R."/>
            <person name="Lorca G."/>
            <person name="Altermann E."/>
            <person name="Barrangou R."/>
            <person name="Ganesan B."/>
            <person name="Xie Y."/>
            <person name="Rawsthorne H."/>
            <person name="Tamir D."/>
            <person name="Parker C."/>
            <person name="Breidt F."/>
            <person name="Broadbent J.R."/>
            <person name="Hutkins R."/>
            <person name="O'Sullivan D."/>
            <person name="Steele J."/>
            <person name="Unlu G."/>
            <person name="Saier M.H. Jr."/>
            <person name="Klaenhammer T."/>
            <person name="Richardson P."/>
            <person name="Kozyavkin S."/>
            <person name="Weimer B.C."/>
            <person name="Mills D.A."/>
        </authorList>
    </citation>
    <scope>NUCLEOTIDE SEQUENCE [LARGE SCALE GENOMIC DNA]</scope>
    <source>
        <strain>ATCC 33323 / DSM 20243 / BCRC 14619 / CIP 102991 / JCM 1131 / KCTC 3163 / NCIMB 11718 / NCTC 13722 / AM63</strain>
    </source>
</reference>
<protein>
    <recommendedName>
        <fullName evidence="1">Large ribosomal subunit protein uL2</fullName>
    </recommendedName>
    <alternativeName>
        <fullName evidence="3">50S ribosomal protein L2</fullName>
    </alternativeName>
</protein>
<sequence>MAIIKYKPTTNGRRNMTSSDFAEITKKKPEKTLLESQSHTAGRNSYGHITVRHRGGGHKQKYRIIDFKRNKDDVKAVVKAIEYDPNRTANIALLHYTDGIKAYILAPKDLKVGTVVESGPNADIKPGNALPLSAIPAGTEIHNIELKPGKGGQLVRSAGTVAQVLGNDGKYTLVRLQSGEVRKILSTCRATIGSVGNEQHSLIQLGKAGRKRWLGKRPQSRGSVMNPNDHPHGGGEGKAPVGRPQPMTPWGKKSRGIKTRNSKARSEKLIIRHRKGNK</sequence>
<proteinExistence type="inferred from homology"/>
<dbReference type="EMBL" id="CP000413">
    <property type="protein sequence ID" value="ABJ59700.1"/>
    <property type="molecule type" value="Genomic_DNA"/>
</dbReference>
<dbReference type="RefSeq" id="WP_003647832.1">
    <property type="nucleotide sequence ID" value="NZ_WBMG01000001.1"/>
</dbReference>
<dbReference type="SMR" id="Q046C2"/>
<dbReference type="GeneID" id="29639231"/>
<dbReference type="KEGG" id="lga:LGAS_0294"/>
<dbReference type="HOGENOM" id="CLU_036235_2_1_9"/>
<dbReference type="BioCyc" id="LGAS324831:G1G6Y-292-MONOMER"/>
<dbReference type="Proteomes" id="UP000000664">
    <property type="component" value="Chromosome"/>
</dbReference>
<dbReference type="GO" id="GO:0015934">
    <property type="term" value="C:large ribosomal subunit"/>
    <property type="evidence" value="ECO:0007669"/>
    <property type="project" value="InterPro"/>
</dbReference>
<dbReference type="GO" id="GO:0019843">
    <property type="term" value="F:rRNA binding"/>
    <property type="evidence" value="ECO:0007669"/>
    <property type="project" value="UniProtKB-UniRule"/>
</dbReference>
<dbReference type="GO" id="GO:0003735">
    <property type="term" value="F:structural constituent of ribosome"/>
    <property type="evidence" value="ECO:0007669"/>
    <property type="project" value="InterPro"/>
</dbReference>
<dbReference type="GO" id="GO:0016740">
    <property type="term" value="F:transferase activity"/>
    <property type="evidence" value="ECO:0007669"/>
    <property type="project" value="InterPro"/>
</dbReference>
<dbReference type="GO" id="GO:0002181">
    <property type="term" value="P:cytoplasmic translation"/>
    <property type="evidence" value="ECO:0007669"/>
    <property type="project" value="TreeGrafter"/>
</dbReference>
<dbReference type="FunFam" id="2.30.30.30:FF:000001">
    <property type="entry name" value="50S ribosomal protein L2"/>
    <property type="match status" value="1"/>
</dbReference>
<dbReference type="FunFam" id="2.40.50.140:FF:000003">
    <property type="entry name" value="50S ribosomal protein L2"/>
    <property type="match status" value="1"/>
</dbReference>
<dbReference type="FunFam" id="4.10.950.10:FF:000001">
    <property type="entry name" value="50S ribosomal protein L2"/>
    <property type="match status" value="1"/>
</dbReference>
<dbReference type="Gene3D" id="2.30.30.30">
    <property type="match status" value="1"/>
</dbReference>
<dbReference type="Gene3D" id="2.40.50.140">
    <property type="entry name" value="Nucleic acid-binding proteins"/>
    <property type="match status" value="1"/>
</dbReference>
<dbReference type="Gene3D" id="4.10.950.10">
    <property type="entry name" value="Ribosomal protein L2, domain 3"/>
    <property type="match status" value="1"/>
</dbReference>
<dbReference type="HAMAP" id="MF_01320_B">
    <property type="entry name" value="Ribosomal_uL2_B"/>
    <property type="match status" value="1"/>
</dbReference>
<dbReference type="InterPro" id="IPR012340">
    <property type="entry name" value="NA-bd_OB-fold"/>
</dbReference>
<dbReference type="InterPro" id="IPR014722">
    <property type="entry name" value="Rib_uL2_dom2"/>
</dbReference>
<dbReference type="InterPro" id="IPR002171">
    <property type="entry name" value="Ribosomal_uL2"/>
</dbReference>
<dbReference type="InterPro" id="IPR005880">
    <property type="entry name" value="Ribosomal_uL2_bac/org-type"/>
</dbReference>
<dbReference type="InterPro" id="IPR022669">
    <property type="entry name" value="Ribosomal_uL2_C"/>
</dbReference>
<dbReference type="InterPro" id="IPR022671">
    <property type="entry name" value="Ribosomal_uL2_CS"/>
</dbReference>
<dbReference type="InterPro" id="IPR014726">
    <property type="entry name" value="Ribosomal_uL2_dom3"/>
</dbReference>
<dbReference type="InterPro" id="IPR022666">
    <property type="entry name" value="Ribosomal_uL2_RNA-bd_dom"/>
</dbReference>
<dbReference type="InterPro" id="IPR008991">
    <property type="entry name" value="Translation_prot_SH3-like_sf"/>
</dbReference>
<dbReference type="NCBIfam" id="TIGR01171">
    <property type="entry name" value="rplB_bact"/>
    <property type="match status" value="1"/>
</dbReference>
<dbReference type="PANTHER" id="PTHR13691:SF5">
    <property type="entry name" value="LARGE RIBOSOMAL SUBUNIT PROTEIN UL2M"/>
    <property type="match status" value="1"/>
</dbReference>
<dbReference type="PANTHER" id="PTHR13691">
    <property type="entry name" value="RIBOSOMAL PROTEIN L2"/>
    <property type="match status" value="1"/>
</dbReference>
<dbReference type="Pfam" id="PF00181">
    <property type="entry name" value="Ribosomal_L2"/>
    <property type="match status" value="1"/>
</dbReference>
<dbReference type="Pfam" id="PF03947">
    <property type="entry name" value="Ribosomal_L2_C"/>
    <property type="match status" value="1"/>
</dbReference>
<dbReference type="PIRSF" id="PIRSF002158">
    <property type="entry name" value="Ribosomal_L2"/>
    <property type="match status" value="1"/>
</dbReference>
<dbReference type="SMART" id="SM01383">
    <property type="entry name" value="Ribosomal_L2"/>
    <property type="match status" value="1"/>
</dbReference>
<dbReference type="SMART" id="SM01382">
    <property type="entry name" value="Ribosomal_L2_C"/>
    <property type="match status" value="1"/>
</dbReference>
<dbReference type="SUPFAM" id="SSF50249">
    <property type="entry name" value="Nucleic acid-binding proteins"/>
    <property type="match status" value="1"/>
</dbReference>
<dbReference type="SUPFAM" id="SSF50104">
    <property type="entry name" value="Translation proteins SH3-like domain"/>
    <property type="match status" value="1"/>
</dbReference>
<dbReference type="PROSITE" id="PS00467">
    <property type="entry name" value="RIBOSOMAL_L2"/>
    <property type="match status" value="1"/>
</dbReference>
<accession>Q046C2</accession>